<dbReference type="EC" id="1.5.1.5" evidence="1"/>
<dbReference type="EC" id="3.5.4.9" evidence="1"/>
<dbReference type="EMBL" id="CP001047">
    <property type="protein sequence ID" value="ACF07250.1"/>
    <property type="molecule type" value="Genomic_DNA"/>
</dbReference>
<dbReference type="RefSeq" id="WP_012498207.1">
    <property type="nucleotide sequence ID" value="NC_011025.1"/>
</dbReference>
<dbReference type="SMR" id="B3PMJ8"/>
<dbReference type="STRING" id="243272.MARTH_orf383"/>
<dbReference type="KEGG" id="mat:MARTH_orf383"/>
<dbReference type="eggNOG" id="COG0190">
    <property type="taxonomic scope" value="Bacteria"/>
</dbReference>
<dbReference type="HOGENOM" id="CLU_034045_2_0_14"/>
<dbReference type="UniPathway" id="UPA00193"/>
<dbReference type="Proteomes" id="UP000008812">
    <property type="component" value="Chromosome"/>
</dbReference>
<dbReference type="GO" id="GO:0005829">
    <property type="term" value="C:cytosol"/>
    <property type="evidence" value="ECO:0007669"/>
    <property type="project" value="TreeGrafter"/>
</dbReference>
<dbReference type="GO" id="GO:0004477">
    <property type="term" value="F:methenyltetrahydrofolate cyclohydrolase activity"/>
    <property type="evidence" value="ECO:0007669"/>
    <property type="project" value="UniProtKB-UniRule"/>
</dbReference>
<dbReference type="GO" id="GO:0004488">
    <property type="term" value="F:methylenetetrahydrofolate dehydrogenase (NADP+) activity"/>
    <property type="evidence" value="ECO:0007669"/>
    <property type="project" value="UniProtKB-UniRule"/>
</dbReference>
<dbReference type="GO" id="GO:0000105">
    <property type="term" value="P:L-histidine biosynthetic process"/>
    <property type="evidence" value="ECO:0007669"/>
    <property type="project" value="UniProtKB-KW"/>
</dbReference>
<dbReference type="GO" id="GO:0009086">
    <property type="term" value="P:methionine biosynthetic process"/>
    <property type="evidence" value="ECO:0007669"/>
    <property type="project" value="UniProtKB-KW"/>
</dbReference>
<dbReference type="GO" id="GO:0006164">
    <property type="term" value="P:purine nucleotide biosynthetic process"/>
    <property type="evidence" value="ECO:0007669"/>
    <property type="project" value="UniProtKB-KW"/>
</dbReference>
<dbReference type="GO" id="GO:0035999">
    <property type="term" value="P:tetrahydrofolate interconversion"/>
    <property type="evidence" value="ECO:0007669"/>
    <property type="project" value="UniProtKB-UniRule"/>
</dbReference>
<dbReference type="CDD" id="cd01080">
    <property type="entry name" value="NAD_bind_m-THF_DH_Cyclohyd"/>
    <property type="match status" value="1"/>
</dbReference>
<dbReference type="Gene3D" id="3.40.50.10860">
    <property type="entry name" value="Leucine Dehydrogenase, chain A, domain 1"/>
    <property type="match status" value="1"/>
</dbReference>
<dbReference type="Gene3D" id="3.40.50.720">
    <property type="entry name" value="NAD(P)-binding Rossmann-like Domain"/>
    <property type="match status" value="1"/>
</dbReference>
<dbReference type="HAMAP" id="MF_01576">
    <property type="entry name" value="THF_DHG_CYH"/>
    <property type="match status" value="1"/>
</dbReference>
<dbReference type="InterPro" id="IPR046346">
    <property type="entry name" value="Aminoacid_DH-like_N_sf"/>
</dbReference>
<dbReference type="InterPro" id="IPR036291">
    <property type="entry name" value="NAD(P)-bd_dom_sf"/>
</dbReference>
<dbReference type="InterPro" id="IPR000672">
    <property type="entry name" value="THF_DH/CycHdrlase"/>
</dbReference>
<dbReference type="InterPro" id="IPR020630">
    <property type="entry name" value="THF_DH/CycHdrlase_cat_dom"/>
</dbReference>
<dbReference type="InterPro" id="IPR020631">
    <property type="entry name" value="THF_DH/CycHdrlase_NAD-bd_dom"/>
</dbReference>
<dbReference type="PANTHER" id="PTHR48099:SF5">
    <property type="entry name" value="C-1-TETRAHYDROFOLATE SYNTHASE, CYTOPLASMIC"/>
    <property type="match status" value="1"/>
</dbReference>
<dbReference type="PANTHER" id="PTHR48099">
    <property type="entry name" value="C-1-TETRAHYDROFOLATE SYNTHASE, CYTOPLASMIC-RELATED"/>
    <property type="match status" value="1"/>
</dbReference>
<dbReference type="Pfam" id="PF00763">
    <property type="entry name" value="THF_DHG_CYH"/>
    <property type="match status" value="1"/>
</dbReference>
<dbReference type="Pfam" id="PF02882">
    <property type="entry name" value="THF_DHG_CYH_C"/>
    <property type="match status" value="1"/>
</dbReference>
<dbReference type="PRINTS" id="PR00085">
    <property type="entry name" value="THFDHDRGNASE"/>
</dbReference>
<dbReference type="SUPFAM" id="SSF53223">
    <property type="entry name" value="Aminoacid dehydrogenase-like, N-terminal domain"/>
    <property type="match status" value="1"/>
</dbReference>
<dbReference type="SUPFAM" id="SSF51735">
    <property type="entry name" value="NAD(P)-binding Rossmann-fold domains"/>
    <property type="match status" value="1"/>
</dbReference>
<gene>
    <name evidence="1" type="primary">folD</name>
    <name type="ordered locus">MARTH_orf383</name>
</gene>
<evidence type="ECO:0000255" key="1">
    <source>
        <dbReference type="HAMAP-Rule" id="MF_01576"/>
    </source>
</evidence>
<feature type="chain" id="PRO_1000196795" description="Bifunctional protein FolD">
    <location>
        <begin position="1"/>
        <end position="293"/>
    </location>
</feature>
<feature type="binding site" evidence="1">
    <location>
        <begin position="162"/>
        <end position="164"/>
    </location>
    <ligand>
        <name>NADP(+)</name>
        <dbReference type="ChEBI" id="CHEBI:58349"/>
    </ligand>
</feature>
<feature type="binding site" evidence="1">
    <location>
        <position position="227"/>
    </location>
    <ligand>
        <name>NADP(+)</name>
        <dbReference type="ChEBI" id="CHEBI:58349"/>
    </ligand>
</feature>
<accession>B3PMJ8</accession>
<sequence>MPVILDGKRLSEALQAKIAMAFSAYRGPKPILGILQVGNKEDSNIYVAHKLKVAESLGFLTKLVKMPENSTQDEIIGTLRNAAAEVTGIIVQLPLVSNRIENLQEILDNIPIEKDIDGLSSYNLASNYNCKDNFLSATPKGIILLLKHYNINFRSTVIALVGQSNIVGKPLAKYLSNFKNNTIKTYVKDTPKDDLHEAKIVIVATGVYQSVTADQLANGTVLIDVGIHRQGKTIHGDLDFASCFKKASYITPVPGGVGPLTVVALMFNLIKALILQNPNLDHEFLSLKEFINI</sequence>
<keyword id="KW-0028">Amino-acid biosynthesis</keyword>
<keyword id="KW-0368">Histidine biosynthesis</keyword>
<keyword id="KW-0378">Hydrolase</keyword>
<keyword id="KW-0486">Methionine biosynthesis</keyword>
<keyword id="KW-0511">Multifunctional enzyme</keyword>
<keyword id="KW-0521">NADP</keyword>
<keyword id="KW-0554">One-carbon metabolism</keyword>
<keyword id="KW-0560">Oxidoreductase</keyword>
<keyword id="KW-0658">Purine biosynthesis</keyword>
<keyword id="KW-1185">Reference proteome</keyword>
<reference key="1">
    <citation type="journal article" date="2008" name="Infect. Immun.">
        <title>Genome of Mycoplasma arthritidis.</title>
        <authorList>
            <person name="Dybvig K."/>
            <person name="Zuhua C."/>
            <person name="Lao P."/>
            <person name="Jordan D.S."/>
            <person name="French C.T."/>
            <person name="Tu A.H."/>
            <person name="Loraine A.E."/>
        </authorList>
    </citation>
    <scope>NUCLEOTIDE SEQUENCE [LARGE SCALE GENOMIC DNA]</scope>
    <source>
        <strain>158L3-1</strain>
    </source>
</reference>
<protein>
    <recommendedName>
        <fullName evidence="1">Bifunctional protein FolD</fullName>
    </recommendedName>
    <domain>
        <recommendedName>
            <fullName evidence="1">Methylenetetrahydrofolate dehydrogenase</fullName>
            <ecNumber evidence="1">1.5.1.5</ecNumber>
        </recommendedName>
    </domain>
    <domain>
        <recommendedName>
            <fullName evidence="1">Methenyltetrahydrofolate cyclohydrolase</fullName>
            <ecNumber evidence="1">3.5.4.9</ecNumber>
        </recommendedName>
    </domain>
</protein>
<name>FOLD_META1</name>
<comment type="function">
    <text evidence="1">Catalyzes the oxidation of 5,10-methylenetetrahydrofolate to 5,10-methenyltetrahydrofolate and then the hydrolysis of 5,10-methenyltetrahydrofolate to 10-formyltetrahydrofolate.</text>
</comment>
<comment type="catalytic activity">
    <reaction evidence="1">
        <text>(6R)-5,10-methylene-5,6,7,8-tetrahydrofolate + NADP(+) = (6R)-5,10-methenyltetrahydrofolate + NADPH</text>
        <dbReference type="Rhea" id="RHEA:22812"/>
        <dbReference type="ChEBI" id="CHEBI:15636"/>
        <dbReference type="ChEBI" id="CHEBI:57455"/>
        <dbReference type="ChEBI" id="CHEBI:57783"/>
        <dbReference type="ChEBI" id="CHEBI:58349"/>
        <dbReference type="EC" id="1.5.1.5"/>
    </reaction>
</comment>
<comment type="catalytic activity">
    <reaction evidence="1">
        <text>(6R)-5,10-methenyltetrahydrofolate + H2O = (6R)-10-formyltetrahydrofolate + H(+)</text>
        <dbReference type="Rhea" id="RHEA:23700"/>
        <dbReference type="ChEBI" id="CHEBI:15377"/>
        <dbReference type="ChEBI" id="CHEBI:15378"/>
        <dbReference type="ChEBI" id="CHEBI:57455"/>
        <dbReference type="ChEBI" id="CHEBI:195366"/>
        <dbReference type="EC" id="3.5.4.9"/>
    </reaction>
</comment>
<comment type="pathway">
    <text evidence="1">One-carbon metabolism; tetrahydrofolate interconversion.</text>
</comment>
<comment type="subunit">
    <text evidence="1">Homodimer.</text>
</comment>
<comment type="similarity">
    <text evidence="1">Belongs to the tetrahydrofolate dehydrogenase/cyclohydrolase family.</text>
</comment>
<proteinExistence type="inferred from homology"/>
<organism>
    <name type="scientific">Metamycoplasma arthritidis (strain 158L3-1)</name>
    <name type="common">Mycoplasma arthritidis</name>
    <dbReference type="NCBI Taxonomy" id="243272"/>
    <lineage>
        <taxon>Bacteria</taxon>
        <taxon>Bacillati</taxon>
        <taxon>Mycoplasmatota</taxon>
        <taxon>Mycoplasmoidales</taxon>
        <taxon>Metamycoplasmataceae</taxon>
        <taxon>Metamycoplasma</taxon>
    </lineage>
</organism>